<proteinExistence type="evidence at protein level"/>
<organism>
    <name type="scientific">Streptomyces sp</name>
    <dbReference type="NCBI Taxonomy" id="1931"/>
    <lineage>
        <taxon>Bacteria</taxon>
        <taxon>Bacillati</taxon>
        <taxon>Actinomycetota</taxon>
        <taxon>Actinomycetes</taxon>
        <taxon>Kitasatosporales</taxon>
        <taxon>Streptomycetaceae</taxon>
        <taxon>Streptomyces</taxon>
    </lineage>
</organism>
<dbReference type="EC" id="1.14.11.28"/>
<dbReference type="EMBL" id="AF003371">
    <property type="protein sequence ID" value="AAB60894.1"/>
    <property type="molecule type" value="Genomic_DNA"/>
</dbReference>
<dbReference type="PDB" id="1E5R">
    <property type="method" value="X-ray"/>
    <property type="resolution" value="2.30 A"/>
    <property type="chains" value="A/B=1-290"/>
</dbReference>
<dbReference type="PDB" id="1E5S">
    <property type="method" value="X-ray"/>
    <property type="resolution" value="2.40 A"/>
    <property type="chains" value="A/B=1-290"/>
</dbReference>
<dbReference type="PDBsum" id="1E5R"/>
<dbReference type="PDBsum" id="1E5S"/>
<dbReference type="SMR" id="O09345"/>
<dbReference type="EvolutionaryTrace" id="O09345"/>
<dbReference type="GO" id="GO:0046872">
    <property type="term" value="F:metal ion binding"/>
    <property type="evidence" value="ECO:0007669"/>
    <property type="project" value="UniProtKB-KW"/>
</dbReference>
<dbReference type="GO" id="GO:0033763">
    <property type="term" value="F:proline 3-hydroxylase activity"/>
    <property type="evidence" value="ECO:0007669"/>
    <property type="project" value="UniProtKB-EC"/>
</dbReference>
<dbReference type="Gene3D" id="2.60.120.330">
    <property type="entry name" value="B-lactam Antibiotic, Isopenicillin N Synthase, Chain"/>
    <property type="match status" value="1"/>
</dbReference>
<dbReference type="Gene3D" id="1.10.1720.10">
    <property type="entry name" value="L-proline 3-hydroxylase, C-terminal domain"/>
    <property type="match status" value="1"/>
</dbReference>
<dbReference type="InterPro" id="IPR007803">
    <property type="entry name" value="Asp/Arg/Pro-Hydrxlase"/>
</dbReference>
<dbReference type="InterPro" id="IPR027443">
    <property type="entry name" value="IPNS-like_sf"/>
</dbReference>
<dbReference type="InterPro" id="IPR008035">
    <property type="entry name" value="Pro_3_hydrox_C"/>
</dbReference>
<dbReference type="InterPro" id="IPR037037">
    <property type="entry name" value="Pro_3_hydrox_C_sf"/>
</dbReference>
<dbReference type="Pfam" id="PF05118">
    <property type="entry name" value="Asp_Arg_Hydrox"/>
    <property type="match status" value="1"/>
</dbReference>
<dbReference type="Pfam" id="PF05373">
    <property type="entry name" value="Pro_3_hydrox_C"/>
    <property type="match status" value="1"/>
</dbReference>
<dbReference type="SUPFAM" id="SSF51197">
    <property type="entry name" value="Clavaminate synthase-like"/>
    <property type="match status" value="1"/>
</dbReference>
<name>P3H2_STRSQ</name>
<comment type="function">
    <text evidence="3">Dioxygenase that catalyzes the 2-oxoglutarate-dependent selective hydroxylation of free L-proline to cis-3-hydroxy-L-proline (cis-3-Hyp).</text>
</comment>
<comment type="catalytic activity">
    <reaction evidence="3">
        <text>L-proline + 2-oxoglutarate + O2 = cis-3-hydroxy-L-proline + succinate + CO2</text>
        <dbReference type="Rhea" id="RHEA:20265"/>
        <dbReference type="ChEBI" id="CHEBI:15379"/>
        <dbReference type="ChEBI" id="CHEBI:16526"/>
        <dbReference type="ChEBI" id="CHEBI:16810"/>
        <dbReference type="ChEBI" id="CHEBI:30031"/>
        <dbReference type="ChEBI" id="CHEBI:60039"/>
        <dbReference type="ChEBI" id="CHEBI:60041"/>
        <dbReference type="EC" id="1.14.11.28"/>
    </reaction>
</comment>
<comment type="cofactor">
    <cofactor evidence="3">
        <name>Fe(2+)</name>
        <dbReference type="ChEBI" id="CHEBI:29033"/>
    </cofactor>
    <text evidence="3">Binds 1 Fe(2+) ion.</text>
</comment>
<comment type="activity regulation">
    <text evidence="3">Inhibited by metal ions such as Co(2+), Zn(2+), Ni(2+) or Cu(2+). Is also inhibited by EDTA in vitro.</text>
</comment>
<comment type="biophysicochemical properties">
    <kinetics>
        <KM evidence="3">0.43 mM for L-proline</KM>
        <KM evidence="3">0.047 mM for 2-oxoglutarate</KM>
        <text>Comparison of both proline 3-hydroxylase isozymes shows that type II enzyme has 1.8-fold higher activity than type I upon L-proline, and 24-fold higher activity upon L-2-azetidinecarboxylic acid.</text>
    </kinetics>
    <phDependence>
        <text evidence="3">Optimum pH is 6.0. Is stable from pH 5.5 to 9.0.</text>
    </phDependence>
    <temperatureDependence>
        <text evidence="3">Optimum temperature is 40 degrees Celsius. Is stable below 40 degrees Celsius.</text>
    </temperatureDependence>
</comment>
<comment type="subunit">
    <text evidence="2">Homodimer.</text>
</comment>
<comment type="similarity">
    <text evidence="4">Belongs to the L-proline cis-4-/cis-3-hydroxylase family.</text>
</comment>
<feature type="chain" id="PRO_0000393427" description="L-proline cis-3-hydroxylase 2">
    <location>
        <begin position="1"/>
        <end position="290"/>
    </location>
</feature>
<feature type="binding site">
    <location>
        <position position="107"/>
    </location>
    <ligand>
        <name>Fe cation</name>
        <dbReference type="ChEBI" id="CHEBI:24875"/>
    </ligand>
</feature>
<feature type="binding site">
    <location>
        <position position="109"/>
    </location>
    <ligand>
        <name>Fe cation</name>
        <dbReference type="ChEBI" id="CHEBI:24875"/>
    </ligand>
</feature>
<feature type="binding site">
    <location>
        <position position="158"/>
    </location>
    <ligand>
        <name>Fe cation</name>
        <dbReference type="ChEBI" id="CHEBI:24875"/>
    </ligand>
</feature>
<feature type="binding site" evidence="1">
    <location>
        <position position="168"/>
    </location>
    <ligand>
        <name>2-oxoglutarate</name>
        <dbReference type="ChEBI" id="CHEBI:16810"/>
    </ligand>
</feature>
<feature type="strand" evidence="5">
    <location>
        <begin position="4"/>
        <end position="8"/>
    </location>
</feature>
<feature type="helix" evidence="5">
    <location>
        <begin position="13"/>
        <end position="25"/>
    </location>
</feature>
<feature type="strand" evidence="5">
    <location>
        <begin position="39"/>
        <end position="47"/>
    </location>
</feature>
<feature type="turn" evidence="5">
    <location>
        <begin position="70"/>
        <end position="73"/>
    </location>
</feature>
<feature type="helix" evidence="5">
    <location>
        <begin position="77"/>
        <end position="85"/>
    </location>
</feature>
<feature type="strand" evidence="5">
    <location>
        <begin position="88"/>
        <end position="107"/>
    </location>
</feature>
<feature type="strand" evidence="5">
    <location>
        <begin position="123"/>
        <end position="126"/>
    </location>
</feature>
<feature type="strand" evidence="5">
    <location>
        <begin position="133"/>
        <end position="137"/>
    </location>
</feature>
<feature type="strand" evidence="5">
    <location>
        <begin position="140"/>
        <end position="142"/>
    </location>
</feature>
<feature type="strand" evidence="5">
    <location>
        <begin position="148"/>
        <end position="151"/>
    </location>
</feature>
<feature type="strand" evidence="5">
    <location>
        <begin position="158"/>
        <end position="166"/>
    </location>
</feature>
<feature type="strand" evidence="5">
    <location>
        <begin position="170"/>
        <end position="176"/>
    </location>
</feature>
<feature type="helix" evidence="5">
    <location>
        <begin position="183"/>
        <end position="186"/>
    </location>
</feature>
<feature type="strand" evidence="5">
    <location>
        <begin position="187"/>
        <end position="189"/>
    </location>
</feature>
<feature type="helix" evidence="5">
    <location>
        <begin position="190"/>
        <end position="192"/>
    </location>
</feature>
<feature type="helix" evidence="5">
    <location>
        <begin position="209"/>
        <end position="216"/>
    </location>
</feature>
<feature type="helix" evidence="5">
    <location>
        <begin position="217"/>
        <end position="220"/>
    </location>
</feature>
<feature type="turn" evidence="5">
    <location>
        <begin position="224"/>
        <end position="226"/>
    </location>
</feature>
<feature type="helix" evidence="5">
    <location>
        <begin position="227"/>
        <end position="240"/>
    </location>
</feature>
<feature type="strand" evidence="5">
    <location>
        <begin position="241"/>
        <end position="243"/>
    </location>
</feature>
<feature type="helix" evidence="5">
    <location>
        <begin position="247"/>
        <end position="258"/>
    </location>
</feature>
<feature type="helix" evidence="5">
    <location>
        <begin position="262"/>
        <end position="276"/>
    </location>
</feature>
<sequence>MRSHILGKIELDQTRLAPDLAYLAAVPTVEEEYDEFSNGFWKHVPLWNASGDSEDRLYRDLKDAAAQPTAHVEHVPYLKEIVTTVFDGTHLQMARSRNLKNAIVIPHRDFVELDREVDRYFRTFMVLEDSPLAFHSNEDTVIHMRPGEIWFLDAATVHSAVNFSEISRQSLCVDFAFDGPFDEKEIFADATLYAPGSTPDLPERRPFTAEHRRRILSLGQVIERENFRDILFLLSKVHYKYDVHPSETYDWLIEISKQAGDEKMVVKAEQIRDFAVEARALSERFSLTSW</sequence>
<reference key="1">
    <citation type="journal article" date="2000" name="Biotechnol. Lett.">
        <title>Cloning of an isozyme of proline 3-hydroxylase and its purification from recombinant Escherichia coli.</title>
        <authorList>
            <person name="Shibasaki T."/>
            <person name="Mori H."/>
            <person name="Ozaki A."/>
        </authorList>
    </citation>
    <scope>NUCLEOTIDE SEQUENCE [GENOMIC DNA]</scope>
    <scope>FUNCTION</scope>
    <scope>CATALYTIC ACTIVITY</scope>
    <scope>COFACTOR</scope>
    <scope>ACTIVITY REGULATION</scope>
    <scope>BIOPHYSICOCHEMICAL PROPERTIES</scope>
    <scope>SUBSTRATE SPECIFICITY</scope>
    <source>
        <strain>TH1 / FERM BP-4399</strain>
    </source>
</reference>
<reference key="2">
    <citation type="journal article" date="2001" name="Eur. J. Biochem.">
        <title>Structure of proline 3-hydroxylase. Evolution of the family of 2-oxoglutarate dependent oxygenases.</title>
        <authorList>
            <person name="Clifton I.J."/>
            <person name="Hsueh L.C."/>
            <person name="Baldwin J.E."/>
            <person name="Harlos K."/>
            <person name="Schofield C.J."/>
        </authorList>
    </citation>
    <scope>X-RAY CRYSTALLOGRAPHY (2.3 ANGSTROMS) OF APOENZYME AND IN COMPLEX WITH FE(2+)</scope>
    <scope>SUBUNIT</scope>
    <scope>REACTION MECHANISM</scope>
</reference>
<protein>
    <recommendedName>
        <fullName>L-proline cis-3-hydroxylase 2</fullName>
        <shortName>P3H 2</shortName>
        <ecNumber>1.14.11.28</ecNumber>
    </recommendedName>
    <alternativeName>
        <fullName>Proline 3-hydroxylase 2</fullName>
    </alternativeName>
    <alternativeName>
        <fullName>Proline 3-hydroxylase type II</fullName>
    </alternativeName>
</protein>
<accession>O09345</accession>
<evidence type="ECO:0000255" key="1"/>
<evidence type="ECO:0000269" key="2">
    <source>
    </source>
</evidence>
<evidence type="ECO:0000269" key="3">
    <source ref="1"/>
</evidence>
<evidence type="ECO:0000305" key="4"/>
<evidence type="ECO:0007829" key="5">
    <source>
        <dbReference type="PDB" id="1E5R"/>
    </source>
</evidence>
<keyword id="KW-0002">3D-structure</keyword>
<keyword id="KW-0223">Dioxygenase</keyword>
<keyword id="KW-0408">Iron</keyword>
<keyword id="KW-0479">Metal-binding</keyword>
<keyword id="KW-0560">Oxidoreductase</keyword>